<dbReference type="EMBL" id="U58884">
    <property type="protein sequence ID" value="AAC52640.1"/>
    <property type="molecule type" value="mRNA"/>
</dbReference>
<dbReference type="EMBL" id="AY098595">
    <property type="protein sequence ID" value="AAM28340.1"/>
    <property type="molecule type" value="mRNA"/>
</dbReference>
<dbReference type="EMBL" id="AK046073">
    <property type="protein sequence ID" value="BAC32592.1"/>
    <property type="molecule type" value="mRNA"/>
</dbReference>
<dbReference type="EMBL" id="AK053796">
    <property type="protein sequence ID" value="BAC35528.1"/>
    <property type="molecule type" value="mRNA"/>
</dbReference>
<dbReference type="EMBL" id="AK078082">
    <property type="protein sequence ID" value="BAC37118.1"/>
    <property type="molecule type" value="mRNA"/>
</dbReference>
<dbReference type="EMBL" id="AK134136">
    <property type="protein sequence ID" value="BAE22028.1"/>
    <property type="molecule type" value="mRNA"/>
</dbReference>
<dbReference type="EMBL" id="AK134487">
    <property type="protein sequence ID" value="BAE22160.1"/>
    <property type="molecule type" value="mRNA"/>
</dbReference>
<dbReference type="EMBL" id="AK140752">
    <property type="protein sequence ID" value="BAE24466.1"/>
    <property type="molecule type" value="mRNA"/>
</dbReference>
<dbReference type="EMBL" id="AK142818">
    <property type="protein sequence ID" value="BAE25201.1"/>
    <property type="molecule type" value="mRNA"/>
</dbReference>
<dbReference type="EMBL" id="AK146920">
    <property type="protein sequence ID" value="BAE27532.1"/>
    <property type="molecule type" value="mRNA"/>
</dbReference>
<dbReference type="EMBL" id="AK151096">
    <property type="protein sequence ID" value="BAE30108.1"/>
    <property type="molecule type" value="mRNA"/>
</dbReference>
<dbReference type="EMBL" id="AK152204">
    <property type="protein sequence ID" value="BAE31033.1"/>
    <property type="molecule type" value="mRNA"/>
</dbReference>
<dbReference type="EMBL" id="AK153389">
    <property type="protein sequence ID" value="BAE31953.1"/>
    <property type="molecule type" value="mRNA"/>
</dbReference>
<dbReference type="EMBL" id="AK159984">
    <property type="protein sequence ID" value="BAE35535.1"/>
    <property type="molecule type" value="mRNA"/>
</dbReference>
<dbReference type="EMBL" id="AK168898">
    <property type="protein sequence ID" value="BAE40714.1"/>
    <property type="molecule type" value="mRNA"/>
</dbReference>
<dbReference type="EMBL" id="AK172471">
    <property type="protein sequence ID" value="BAE43024.1"/>
    <property type="molecule type" value="mRNA"/>
</dbReference>
<dbReference type="EMBL" id="AL627069">
    <property type="status" value="NOT_ANNOTATED_CDS"/>
    <property type="molecule type" value="Genomic_DNA"/>
</dbReference>
<dbReference type="EMBL" id="BC046430">
    <property type="protein sequence ID" value="AAH46430.1"/>
    <property type="molecule type" value="mRNA"/>
</dbReference>
<dbReference type="CCDS" id="CCDS24403.1">
    <molecule id="Q62418-2"/>
</dbReference>
<dbReference type="CCDS" id="CCDS48746.1">
    <molecule id="Q62418-1"/>
</dbReference>
<dbReference type="CCDS" id="CCDS48747.1">
    <molecule id="Q62418-3"/>
</dbReference>
<dbReference type="RefSeq" id="NP_001139780.1">
    <molecule id="Q62418-1"/>
    <property type="nucleotide sequence ID" value="NM_001146308.1"/>
</dbReference>
<dbReference type="RefSeq" id="NP_001139781.1">
    <molecule id="Q62418-3"/>
    <property type="nucleotide sequence ID" value="NM_001146309.1"/>
</dbReference>
<dbReference type="RefSeq" id="NP_038838.1">
    <molecule id="Q62418-2"/>
    <property type="nucleotide sequence ID" value="NM_013810.3"/>
</dbReference>
<dbReference type="RefSeq" id="XP_036012173.1">
    <molecule id="Q62418-1"/>
    <property type="nucleotide sequence ID" value="XM_036156280.1"/>
</dbReference>
<dbReference type="SMR" id="Q62418"/>
<dbReference type="BioGRID" id="199059">
    <property type="interactions" value="33"/>
</dbReference>
<dbReference type="DIP" id="DIP-39835N"/>
<dbReference type="FunCoup" id="Q62418">
    <property type="interactions" value="2856"/>
</dbReference>
<dbReference type="IntAct" id="Q62418">
    <property type="interactions" value="7"/>
</dbReference>
<dbReference type="MINT" id="Q62418"/>
<dbReference type="STRING" id="10090.ENSMUSP00000020769"/>
<dbReference type="GlyGen" id="Q62418">
    <property type="glycosylation" value="4 sites, 2 N-linked glycans (2 sites), 1 O-linked glycan (2 sites)"/>
</dbReference>
<dbReference type="iPTMnet" id="Q62418"/>
<dbReference type="PhosphoSitePlus" id="Q62418"/>
<dbReference type="SwissPalm" id="Q62418"/>
<dbReference type="jPOST" id="Q62418"/>
<dbReference type="PaxDb" id="10090-ENSMUSP00000020769"/>
<dbReference type="PeptideAtlas" id="Q62418"/>
<dbReference type="ProteomicsDB" id="279155">
    <molecule id="Q62418-1"/>
</dbReference>
<dbReference type="ProteomicsDB" id="279156">
    <molecule id="Q62418-2"/>
</dbReference>
<dbReference type="ProteomicsDB" id="279157">
    <molecule id="Q62418-3"/>
</dbReference>
<dbReference type="Pumba" id="Q62418"/>
<dbReference type="Antibodypedia" id="13203">
    <property type="antibodies" value="270 antibodies from 34 providers"/>
</dbReference>
<dbReference type="DNASU" id="13169"/>
<dbReference type="Ensembl" id="ENSMUST00000020769.14">
    <molecule id="Q62418-1"/>
    <property type="protein sequence ID" value="ENSMUSP00000020769.8"/>
    <property type="gene ID" value="ENSMUSG00000020476.15"/>
</dbReference>
<dbReference type="Ensembl" id="ENSMUST00000102928.5">
    <molecule id="Q62418-2"/>
    <property type="protein sequence ID" value="ENSMUSP00000099992.5"/>
    <property type="gene ID" value="ENSMUSG00000020476.15"/>
</dbReference>
<dbReference type="Ensembl" id="ENSMUST00000109845.8">
    <molecule id="Q62418-3"/>
    <property type="protein sequence ID" value="ENSMUSP00000105471.2"/>
    <property type="gene ID" value="ENSMUSG00000020476.15"/>
</dbReference>
<dbReference type="GeneID" id="13169"/>
<dbReference type="KEGG" id="mmu:13169"/>
<dbReference type="UCSC" id="uc007hxb.2">
    <molecule id="Q62418-2"/>
    <property type="organism name" value="mouse"/>
</dbReference>
<dbReference type="UCSC" id="uc007hxc.2">
    <molecule id="Q62418-3"/>
    <property type="organism name" value="mouse"/>
</dbReference>
<dbReference type="UCSC" id="uc007hxd.2">
    <molecule id="Q62418-1"/>
    <property type="organism name" value="mouse"/>
</dbReference>
<dbReference type="AGR" id="MGI:700006"/>
<dbReference type="CTD" id="28988"/>
<dbReference type="MGI" id="MGI:700006">
    <property type="gene designation" value="Dbnl"/>
</dbReference>
<dbReference type="VEuPathDB" id="HostDB:ENSMUSG00000020476"/>
<dbReference type="eggNOG" id="KOG3655">
    <property type="taxonomic scope" value="Eukaryota"/>
</dbReference>
<dbReference type="GeneTree" id="ENSGT00940000156732"/>
<dbReference type="HOGENOM" id="CLU_013085_0_1_1"/>
<dbReference type="InParanoid" id="Q62418"/>
<dbReference type="OMA" id="FKEPRGA"/>
<dbReference type="OrthoDB" id="5971719at2759"/>
<dbReference type="PhylomeDB" id="Q62418"/>
<dbReference type="TreeFam" id="TF318935"/>
<dbReference type="BioGRID-ORCS" id="13169">
    <property type="hits" value="3 hits in 78 CRISPR screens"/>
</dbReference>
<dbReference type="CD-CODE" id="CE726F99">
    <property type="entry name" value="Postsynaptic density"/>
</dbReference>
<dbReference type="ChiTaRS" id="Dbnl">
    <property type="organism name" value="mouse"/>
</dbReference>
<dbReference type="PRO" id="PR:Q62418"/>
<dbReference type="Proteomes" id="UP000000589">
    <property type="component" value="Chromosome 11"/>
</dbReference>
<dbReference type="RNAct" id="Q62418">
    <property type="molecule type" value="protein"/>
</dbReference>
<dbReference type="Bgee" id="ENSMUSG00000020476">
    <property type="expression patterns" value="Expressed in ileal epithelium and 261 other cell types or tissues"/>
</dbReference>
<dbReference type="GO" id="GO:0070161">
    <property type="term" value="C:anchoring junction"/>
    <property type="evidence" value="ECO:0007669"/>
    <property type="project" value="UniProtKB-KW"/>
</dbReference>
<dbReference type="GO" id="GO:0005938">
    <property type="term" value="C:cell cortex"/>
    <property type="evidence" value="ECO:0000314"/>
    <property type="project" value="MGI"/>
</dbReference>
<dbReference type="GO" id="GO:0030665">
    <property type="term" value="C:clathrin-coated vesicle membrane"/>
    <property type="evidence" value="ECO:0007669"/>
    <property type="project" value="UniProtKB-SubCell"/>
</dbReference>
<dbReference type="GO" id="GO:0005737">
    <property type="term" value="C:cytoplasm"/>
    <property type="evidence" value="ECO:0000314"/>
    <property type="project" value="MGI"/>
</dbReference>
<dbReference type="GO" id="GO:0005829">
    <property type="term" value="C:cytosol"/>
    <property type="evidence" value="ECO:0007669"/>
    <property type="project" value="UniProtKB-SubCell"/>
</dbReference>
<dbReference type="GO" id="GO:0030425">
    <property type="term" value="C:dendrite"/>
    <property type="evidence" value="ECO:0007669"/>
    <property type="project" value="UniProtKB-SubCell"/>
</dbReference>
<dbReference type="GO" id="GO:0005769">
    <property type="term" value="C:early endosome"/>
    <property type="evidence" value="ECO:0007669"/>
    <property type="project" value="UniProtKB-SubCell"/>
</dbReference>
<dbReference type="GO" id="GO:0098978">
    <property type="term" value="C:glutamatergic synapse"/>
    <property type="evidence" value="ECO:0007669"/>
    <property type="project" value="Ensembl"/>
</dbReference>
<dbReference type="GO" id="GO:0000139">
    <property type="term" value="C:Golgi membrane"/>
    <property type="evidence" value="ECO:0007669"/>
    <property type="project" value="UniProtKB-SubCell"/>
</dbReference>
<dbReference type="GO" id="GO:0030027">
    <property type="term" value="C:lamellipodium"/>
    <property type="evidence" value="ECO:0000314"/>
    <property type="project" value="UniProtKB"/>
</dbReference>
<dbReference type="GO" id="GO:0043204">
    <property type="term" value="C:perikaryon"/>
    <property type="evidence" value="ECO:0007669"/>
    <property type="project" value="UniProtKB-SubCell"/>
</dbReference>
<dbReference type="GO" id="GO:0005886">
    <property type="term" value="C:plasma membrane"/>
    <property type="evidence" value="ECO:0007669"/>
    <property type="project" value="UniProtKB-SubCell"/>
</dbReference>
<dbReference type="GO" id="GO:0002102">
    <property type="term" value="C:podosome"/>
    <property type="evidence" value="ECO:0000314"/>
    <property type="project" value="UniProtKB"/>
</dbReference>
<dbReference type="GO" id="GO:0014069">
    <property type="term" value="C:postsynaptic density"/>
    <property type="evidence" value="ECO:0007669"/>
    <property type="project" value="UniProtKB-SubCell"/>
</dbReference>
<dbReference type="GO" id="GO:0098793">
    <property type="term" value="C:presynapse"/>
    <property type="evidence" value="ECO:0007669"/>
    <property type="project" value="Ensembl"/>
</dbReference>
<dbReference type="GO" id="GO:0001726">
    <property type="term" value="C:ruffle"/>
    <property type="evidence" value="ECO:0000314"/>
    <property type="project" value="UniProtKB"/>
</dbReference>
<dbReference type="GO" id="GO:0003779">
    <property type="term" value="F:actin binding"/>
    <property type="evidence" value="ECO:0000314"/>
    <property type="project" value="MGI"/>
</dbReference>
<dbReference type="GO" id="GO:0051015">
    <property type="term" value="F:actin filament binding"/>
    <property type="evidence" value="ECO:0000314"/>
    <property type="project" value="UniProtKB"/>
</dbReference>
<dbReference type="GO" id="GO:0019904">
    <property type="term" value="F:protein domain specific binding"/>
    <property type="evidence" value="ECO:0000314"/>
    <property type="project" value="MGI"/>
</dbReference>
<dbReference type="GO" id="GO:0098973">
    <property type="term" value="F:structural constituent of postsynaptic actin cytoskeleton"/>
    <property type="evidence" value="ECO:0007669"/>
    <property type="project" value="Ensembl"/>
</dbReference>
<dbReference type="GO" id="GO:0002250">
    <property type="term" value="P:adaptive immune response"/>
    <property type="evidence" value="ECO:0007669"/>
    <property type="project" value="UniProtKB-KW"/>
</dbReference>
<dbReference type="GO" id="GO:0006897">
    <property type="term" value="P:endocytosis"/>
    <property type="evidence" value="ECO:0007669"/>
    <property type="project" value="UniProtKB-KW"/>
</dbReference>
<dbReference type="GO" id="GO:0048812">
    <property type="term" value="P:neuron projection morphogenesis"/>
    <property type="evidence" value="ECO:0000315"/>
    <property type="project" value="UniProtKB"/>
</dbReference>
<dbReference type="GO" id="GO:0071800">
    <property type="term" value="P:podosome assembly"/>
    <property type="evidence" value="ECO:0000315"/>
    <property type="project" value="UniProtKB"/>
</dbReference>
<dbReference type="GO" id="GO:0016601">
    <property type="term" value="P:Rac protein signal transduction"/>
    <property type="evidence" value="ECO:0000314"/>
    <property type="project" value="MGI"/>
</dbReference>
<dbReference type="GO" id="GO:0007416">
    <property type="term" value="P:synapse assembly"/>
    <property type="evidence" value="ECO:0000315"/>
    <property type="project" value="UniProtKB"/>
</dbReference>
<dbReference type="CDD" id="cd11281">
    <property type="entry name" value="ADF_drebrin_like"/>
    <property type="match status" value="1"/>
</dbReference>
<dbReference type="CDD" id="cd11960">
    <property type="entry name" value="SH3_Abp1_eu"/>
    <property type="match status" value="1"/>
</dbReference>
<dbReference type="FunFam" id="3.40.20.10:FF:000011">
    <property type="entry name" value="Drebrin-like protein B"/>
    <property type="match status" value="1"/>
</dbReference>
<dbReference type="FunFam" id="2.30.30.40:FF:000046">
    <property type="entry name" value="Drebrin-like protein isoform B"/>
    <property type="match status" value="1"/>
</dbReference>
<dbReference type="Gene3D" id="3.40.20.10">
    <property type="entry name" value="Severin"/>
    <property type="match status" value="1"/>
</dbReference>
<dbReference type="Gene3D" id="2.30.30.40">
    <property type="entry name" value="SH3 Domains"/>
    <property type="match status" value="1"/>
</dbReference>
<dbReference type="InterPro" id="IPR002108">
    <property type="entry name" value="ADF-H"/>
</dbReference>
<dbReference type="InterPro" id="IPR029006">
    <property type="entry name" value="ADF-H/Gelsolin-like_dom_sf"/>
</dbReference>
<dbReference type="InterPro" id="IPR035717">
    <property type="entry name" value="Drebrin-like_SH3"/>
</dbReference>
<dbReference type="InterPro" id="IPR036028">
    <property type="entry name" value="SH3-like_dom_sf"/>
</dbReference>
<dbReference type="InterPro" id="IPR001452">
    <property type="entry name" value="SH3_domain"/>
</dbReference>
<dbReference type="PANTHER" id="PTHR10829">
    <property type="entry name" value="CORTACTIN AND DREBRIN"/>
    <property type="match status" value="1"/>
</dbReference>
<dbReference type="PANTHER" id="PTHR10829:SF12">
    <property type="entry name" value="DREBRIN-LIKE PROTEIN"/>
    <property type="match status" value="1"/>
</dbReference>
<dbReference type="Pfam" id="PF00241">
    <property type="entry name" value="Cofilin_ADF"/>
    <property type="match status" value="1"/>
</dbReference>
<dbReference type="Pfam" id="PF14604">
    <property type="entry name" value="SH3_9"/>
    <property type="match status" value="1"/>
</dbReference>
<dbReference type="SMART" id="SM00102">
    <property type="entry name" value="ADF"/>
    <property type="match status" value="1"/>
</dbReference>
<dbReference type="SMART" id="SM00326">
    <property type="entry name" value="SH3"/>
    <property type="match status" value="1"/>
</dbReference>
<dbReference type="SUPFAM" id="SSF55753">
    <property type="entry name" value="Actin depolymerizing proteins"/>
    <property type="match status" value="1"/>
</dbReference>
<dbReference type="SUPFAM" id="SSF50044">
    <property type="entry name" value="SH3-domain"/>
    <property type="match status" value="1"/>
</dbReference>
<dbReference type="PROSITE" id="PS51263">
    <property type="entry name" value="ADF_H"/>
    <property type="match status" value="1"/>
</dbReference>
<dbReference type="PROSITE" id="PS50002">
    <property type="entry name" value="SH3"/>
    <property type="match status" value="1"/>
</dbReference>
<keyword id="KW-0007">Acetylation</keyword>
<keyword id="KW-0009">Actin-binding</keyword>
<keyword id="KW-1064">Adaptive immunity</keyword>
<keyword id="KW-0025">Alternative splicing</keyword>
<keyword id="KW-0965">Cell junction</keyword>
<keyword id="KW-1003">Cell membrane</keyword>
<keyword id="KW-0966">Cell projection</keyword>
<keyword id="KW-0175">Coiled coil</keyword>
<keyword id="KW-0963">Cytoplasm</keyword>
<keyword id="KW-0968">Cytoplasmic vesicle</keyword>
<keyword id="KW-0206">Cytoskeleton</keyword>
<keyword id="KW-0903">Direct protein sequencing</keyword>
<keyword id="KW-0254">Endocytosis</keyword>
<keyword id="KW-0967">Endosome</keyword>
<keyword id="KW-0333">Golgi apparatus</keyword>
<keyword id="KW-0391">Immunity</keyword>
<keyword id="KW-0472">Membrane</keyword>
<keyword id="KW-0597">Phosphoprotein</keyword>
<keyword id="KW-1185">Reference proteome</keyword>
<keyword id="KW-0728">SH3 domain</keyword>
<keyword id="KW-0770">Synapse</keyword>
<keyword id="KW-0813">Transport</keyword>
<name>DBNL_MOUSE</name>
<gene>
    <name evidence="27" type="primary">Dbnl</name>
    <name evidence="20" type="synonym">Abp1</name>
    <name evidence="21" type="synonym">Sh3p7</name>
</gene>
<organism>
    <name type="scientific">Mus musculus</name>
    <name type="common">Mouse</name>
    <dbReference type="NCBI Taxonomy" id="10090"/>
    <lineage>
        <taxon>Eukaryota</taxon>
        <taxon>Metazoa</taxon>
        <taxon>Chordata</taxon>
        <taxon>Craniata</taxon>
        <taxon>Vertebrata</taxon>
        <taxon>Euteleostomi</taxon>
        <taxon>Mammalia</taxon>
        <taxon>Eutheria</taxon>
        <taxon>Euarchontoglires</taxon>
        <taxon>Glires</taxon>
        <taxon>Rodentia</taxon>
        <taxon>Myomorpha</taxon>
        <taxon>Muroidea</taxon>
        <taxon>Muridae</taxon>
        <taxon>Murinae</taxon>
        <taxon>Mus</taxon>
        <taxon>Mus</taxon>
    </lineage>
</organism>
<reference key="1">
    <citation type="journal article" date="1996" name="Nat. Biotechnol.">
        <title>Cloning of ligand targets: systematic isolation of SH3 domain-containing proteins.</title>
        <authorList>
            <person name="Sparks A.B."/>
            <person name="Hoffman N.G."/>
            <person name="McConnell S.J."/>
            <person name="Fowlkes D.M."/>
            <person name="Kay B.K."/>
        </authorList>
    </citation>
    <scope>NUCLEOTIDE SEQUENCE [MRNA] (ISOFORM 2)</scope>
    <source>
        <tissue>Embryo</tissue>
    </source>
</reference>
<reference evidence="23" key="2">
    <citation type="journal article" date="1999" name="Mol. Cell. Biol.">
        <title>SH3P7 is a cytoskeleton adapter protein and is coupled to signal transduction from lymphocyte antigen receptors.</title>
        <authorList>
            <person name="Larbolette O."/>
            <person name="Wollscheid B."/>
            <person name="Schweikert J."/>
            <person name="Nielsen P.J."/>
            <person name="Wienands J."/>
        </authorList>
    </citation>
    <scope>NUCLEOTIDE SEQUENCE [MRNA] (ISOFORM 2)</scope>
    <scope>PROTEIN SEQUENCE OF 79-94 AND 135-144</scope>
    <scope>SUBCELLULAR LOCATION</scope>
    <scope>TISSUE SPECIFICITY</scope>
    <scope>MUTAGENESIS OF TYR-340 AND TYR-350</scope>
    <scope>PHOSPHORYLATION AT TYR-340 AND TYR-350</scope>
    <source>
        <tissue evidence="17">Myeloma</tissue>
    </source>
</reference>
<reference evidence="23 26" key="3">
    <citation type="journal article" date="2003" name="Hum. Mol. Genet.">
        <title>Fgd1, the Cdc42 GEF responsible for faciogenital dysplasia, directly interacts with cortactin and mAbp1 to modulate cell shape.</title>
        <authorList>
            <person name="Hou P."/>
            <person name="Estrada L."/>
            <person name="Kinley A.W."/>
            <person name="Parsons J.T."/>
            <person name="Vojtek A.B."/>
            <person name="Gorski J.L."/>
        </authorList>
    </citation>
    <scope>NUCLEOTIDE SEQUENCE [MRNA] (ISOFORM 1)</scope>
    <scope>SUBCELLULAR LOCATION</scope>
    <scope>INTERACTION WITH FGD1</scope>
    <source>
        <strain evidence="26">C57BL/6J</strain>
        <tissue>Osteoblast</tissue>
    </source>
</reference>
<reference key="4">
    <citation type="journal article" date="2005" name="Science">
        <title>The transcriptional landscape of the mammalian genome.</title>
        <authorList>
            <person name="Carninci P."/>
            <person name="Kasukawa T."/>
            <person name="Katayama S."/>
            <person name="Gough J."/>
            <person name="Frith M.C."/>
            <person name="Maeda N."/>
            <person name="Oyama R."/>
            <person name="Ravasi T."/>
            <person name="Lenhard B."/>
            <person name="Wells C."/>
            <person name="Kodzius R."/>
            <person name="Shimokawa K."/>
            <person name="Bajic V.B."/>
            <person name="Brenner S.E."/>
            <person name="Batalov S."/>
            <person name="Forrest A.R."/>
            <person name="Zavolan M."/>
            <person name="Davis M.J."/>
            <person name="Wilming L.G."/>
            <person name="Aidinis V."/>
            <person name="Allen J.E."/>
            <person name="Ambesi-Impiombato A."/>
            <person name="Apweiler R."/>
            <person name="Aturaliya R.N."/>
            <person name="Bailey T.L."/>
            <person name="Bansal M."/>
            <person name="Baxter L."/>
            <person name="Beisel K.W."/>
            <person name="Bersano T."/>
            <person name="Bono H."/>
            <person name="Chalk A.M."/>
            <person name="Chiu K.P."/>
            <person name="Choudhary V."/>
            <person name="Christoffels A."/>
            <person name="Clutterbuck D.R."/>
            <person name="Crowe M.L."/>
            <person name="Dalla E."/>
            <person name="Dalrymple B.P."/>
            <person name="de Bono B."/>
            <person name="Della Gatta G."/>
            <person name="di Bernardo D."/>
            <person name="Down T."/>
            <person name="Engstrom P."/>
            <person name="Fagiolini M."/>
            <person name="Faulkner G."/>
            <person name="Fletcher C.F."/>
            <person name="Fukushima T."/>
            <person name="Furuno M."/>
            <person name="Futaki S."/>
            <person name="Gariboldi M."/>
            <person name="Georgii-Hemming P."/>
            <person name="Gingeras T.R."/>
            <person name="Gojobori T."/>
            <person name="Green R.E."/>
            <person name="Gustincich S."/>
            <person name="Harbers M."/>
            <person name="Hayashi Y."/>
            <person name="Hensch T.K."/>
            <person name="Hirokawa N."/>
            <person name="Hill D."/>
            <person name="Huminiecki L."/>
            <person name="Iacono M."/>
            <person name="Ikeo K."/>
            <person name="Iwama A."/>
            <person name="Ishikawa T."/>
            <person name="Jakt M."/>
            <person name="Kanapin A."/>
            <person name="Katoh M."/>
            <person name="Kawasawa Y."/>
            <person name="Kelso J."/>
            <person name="Kitamura H."/>
            <person name="Kitano H."/>
            <person name="Kollias G."/>
            <person name="Krishnan S.P."/>
            <person name="Kruger A."/>
            <person name="Kummerfeld S.K."/>
            <person name="Kurochkin I.V."/>
            <person name="Lareau L.F."/>
            <person name="Lazarevic D."/>
            <person name="Lipovich L."/>
            <person name="Liu J."/>
            <person name="Liuni S."/>
            <person name="McWilliam S."/>
            <person name="Madan Babu M."/>
            <person name="Madera M."/>
            <person name="Marchionni L."/>
            <person name="Matsuda H."/>
            <person name="Matsuzawa S."/>
            <person name="Miki H."/>
            <person name="Mignone F."/>
            <person name="Miyake S."/>
            <person name="Morris K."/>
            <person name="Mottagui-Tabar S."/>
            <person name="Mulder N."/>
            <person name="Nakano N."/>
            <person name="Nakauchi H."/>
            <person name="Ng P."/>
            <person name="Nilsson R."/>
            <person name="Nishiguchi S."/>
            <person name="Nishikawa S."/>
            <person name="Nori F."/>
            <person name="Ohara O."/>
            <person name="Okazaki Y."/>
            <person name="Orlando V."/>
            <person name="Pang K.C."/>
            <person name="Pavan W.J."/>
            <person name="Pavesi G."/>
            <person name="Pesole G."/>
            <person name="Petrovsky N."/>
            <person name="Piazza S."/>
            <person name="Reed J."/>
            <person name="Reid J.F."/>
            <person name="Ring B.Z."/>
            <person name="Ringwald M."/>
            <person name="Rost B."/>
            <person name="Ruan Y."/>
            <person name="Salzberg S.L."/>
            <person name="Sandelin A."/>
            <person name="Schneider C."/>
            <person name="Schoenbach C."/>
            <person name="Sekiguchi K."/>
            <person name="Semple C.A."/>
            <person name="Seno S."/>
            <person name="Sessa L."/>
            <person name="Sheng Y."/>
            <person name="Shibata Y."/>
            <person name="Shimada H."/>
            <person name="Shimada K."/>
            <person name="Silva D."/>
            <person name="Sinclair B."/>
            <person name="Sperling S."/>
            <person name="Stupka E."/>
            <person name="Sugiura K."/>
            <person name="Sultana R."/>
            <person name="Takenaka Y."/>
            <person name="Taki K."/>
            <person name="Tammoja K."/>
            <person name="Tan S.L."/>
            <person name="Tang S."/>
            <person name="Taylor M.S."/>
            <person name="Tegner J."/>
            <person name="Teichmann S.A."/>
            <person name="Ueda H.R."/>
            <person name="van Nimwegen E."/>
            <person name="Verardo R."/>
            <person name="Wei C.L."/>
            <person name="Yagi K."/>
            <person name="Yamanishi H."/>
            <person name="Zabarovsky E."/>
            <person name="Zhu S."/>
            <person name="Zimmer A."/>
            <person name="Hide W."/>
            <person name="Bult C."/>
            <person name="Grimmond S.M."/>
            <person name="Teasdale R.D."/>
            <person name="Liu E.T."/>
            <person name="Brusic V."/>
            <person name="Quackenbush J."/>
            <person name="Wahlestedt C."/>
            <person name="Mattick J.S."/>
            <person name="Hume D.A."/>
            <person name="Kai C."/>
            <person name="Sasaki D."/>
            <person name="Tomaru Y."/>
            <person name="Fukuda S."/>
            <person name="Kanamori-Katayama M."/>
            <person name="Suzuki M."/>
            <person name="Aoki J."/>
            <person name="Arakawa T."/>
            <person name="Iida J."/>
            <person name="Imamura K."/>
            <person name="Itoh M."/>
            <person name="Kato T."/>
            <person name="Kawaji H."/>
            <person name="Kawagashira N."/>
            <person name="Kawashima T."/>
            <person name="Kojima M."/>
            <person name="Kondo S."/>
            <person name="Konno H."/>
            <person name="Nakano K."/>
            <person name="Ninomiya N."/>
            <person name="Nishio T."/>
            <person name="Okada M."/>
            <person name="Plessy C."/>
            <person name="Shibata K."/>
            <person name="Shiraki T."/>
            <person name="Suzuki S."/>
            <person name="Tagami M."/>
            <person name="Waki K."/>
            <person name="Watahiki A."/>
            <person name="Okamura-Oho Y."/>
            <person name="Suzuki H."/>
            <person name="Kawai J."/>
            <person name="Hayashizaki Y."/>
        </authorList>
    </citation>
    <scope>NUCLEOTIDE SEQUENCE [LARGE SCALE MRNA] (ISOFORMS 1; 2 AND 3)</scope>
    <source>
        <strain>C57BL/6J</strain>
        <strain>NOD</strain>
        <tissue>Amnion</tissue>
        <tissue>Bone marrow</tissue>
        <tissue>Corpora quadrigemina</tissue>
        <tissue>Eye</tissue>
        <tissue>Head</tissue>
        <tissue>Kidney</tissue>
        <tissue>Medulla oblongata</tissue>
        <tissue>Spleen</tissue>
        <tissue>Thymus</tissue>
    </source>
</reference>
<reference key="5">
    <citation type="journal article" date="2009" name="PLoS Biol.">
        <title>Lineage-specific biology revealed by a finished genome assembly of the mouse.</title>
        <authorList>
            <person name="Church D.M."/>
            <person name="Goodstadt L."/>
            <person name="Hillier L.W."/>
            <person name="Zody M.C."/>
            <person name="Goldstein S."/>
            <person name="She X."/>
            <person name="Bult C.J."/>
            <person name="Agarwala R."/>
            <person name="Cherry J.L."/>
            <person name="DiCuccio M."/>
            <person name="Hlavina W."/>
            <person name="Kapustin Y."/>
            <person name="Meric P."/>
            <person name="Maglott D."/>
            <person name="Birtle Z."/>
            <person name="Marques A.C."/>
            <person name="Graves T."/>
            <person name="Zhou S."/>
            <person name="Teague B."/>
            <person name="Potamousis K."/>
            <person name="Churas C."/>
            <person name="Place M."/>
            <person name="Herschleb J."/>
            <person name="Runnheim R."/>
            <person name="Forrest D."/>
            <person name="Amos-Landgraf J."/>
            <person name="Schwartz D.C."/>
            <person name="Cheng Z."/>
            <person name="Lindblad-Toh K."/>
            <person name="Eichler E.E."/>
            <person name="Ponting C.P."/>
        </authorList>
    </citation>
    <scope>NUCLEOTIDE SEQUENCE [LARGE SCALE GENOMIC DNA]</scope>
    <source>
        <strain>C57BL/6J</strain>
    </source>
</reference>
<reference evidence="23 25" key="6">
    <citation type="journal article" date="2004" name="Genome Res.">
        <title>The status, quality, and expansion of the NIH full-length cDNA project: the Mammalian Gene Collection (MGC).</title>
        <authorList>
            <consortium name="The MGC Project Team"/>
        </authorList>
    </citation>
    <scope>NUCLEOTIDE SEQUENCE [LARGE SCALE MRNA] (ISOFORM 3)</scope>
    <source>
        <strain evidence="25">FVB/N</strain>
        <tissue evidence="25">Colon</tissue>
    </source>
</reference>
<reference evidence="23" key="7">
    <citation type="journal article" date="2000" name="Mol. Biol. Cell">
        <title>Association of mouse actin-binding protein 1 (mAbp1/SH3P7), an Src kinase target, with dynamic regions of the cortical actin cytoskeleton in response to Rac1 activation.</title>
        <authorList>
            <person name="Kessels M.M."/>
            <person name="Engqvist-Goldstein A.E.Y."/>
            <person name="Drubin D.G."/>
        </authorList>
    </citation>
    <scope>INTERACTION WITH ACTIN</scope>
    <scope>SUBCELLULAR LOCATION</scope>
    <scope>TISSUE SPECIFICITY</scope>
    <scope>DEVELOPMENTAL STAGE</scope>
</reference>
<reference key="8">
    <citation type="journal article" date="2001" name="J. Cell Biol.">
        <title>Mammalian Abp1, a signal-responsive F-actin-binding protein, links the actin cytoskeleton to endocytosis via the GTPase dynamin.</title>
        <authorList>
            <person name="Kessels M.M."/>
            <person name="Engqvist-Goldstein A.E."/>
            <person name="Drubin D.G."/>
            <person name="Qualmann B."/>
        </authorList>
    </citation>
    <scope>FUNCTION</scope>
    <scope>INTERACTION WITH DNM1</scope>
    <scope>ACTIN-BINDING</scope>
    <scope>SUBCELLULAR LOCATION</scope>
</reference>
<reference key="9">
    <citation type="journal article" date="2006" name="J. Biol. Chem.">
        <title>The actin-depolymerizing factor homology and charged/helical domains of drebrin and mAbp1 direct membrane binding and localization via distinct interactions with actin.</title>
        <authorList>
            <person name="Xu W."/>
            <person name="Stamnes M."/>
        </authorList>
    </citation>
    <scope>ACTIN-BINDING</scope>
    <scope>SUBCELLULAR LOCATION</scope>
</reference>
<reference key="10">
    <citation type="journal article" date="2007" name="PLoS ONE">
        <title>Regulation of N-WASP and the Arp2/3 complex by Abp1 controls neuronal morphology.</title>
        <authorList>
            <person name="Pinyol R."/>
            <person name="Haeckel A."/>
            <person name="Ritter A."/>
            <person name="Qualmann B."/>
            <person name="Kessels M.M."/>
        </authorList>
    </citation>
    <scope>FUNCTION</scope>
    <scope>SUBCELLULAR LOCATION</scope>
    <scope>INTERACTION WITH WASL</scope>
</reference>
<reference key="11">
    <citation type="journal article" date="2007" name="Proc. Natl. Acad. Sci. U.S.A.">
        <title>Large-scale phosphorylation analysis of mouse liver.</title>
        <authorList>
            <person name="Villen J."/>
            <person name="Beausoleil S.A."/>
            <person name="Gerber S.A."/>
            <person name="Gygi S.P."/>
        </authorList>
    </citation>
    <scope>PHOSPHORYLATION [LARGE SCALE ANALYSIS] AT SER-277</scope>
    <scope>IDENTIFICATION BY MASS SPECTROMETRY [LARGE SCALE ANALYSIS]</scope>
    <source>
        <tissue>Liver</tissue>
    </source>
</reference>
<reference key="12">
    <citation type="journal article" date="2008" name="J. Neurosci.">
        <title>The actin-binding protein Abp1 controls dendritic spine morphology and is important for spine head and synapse formation.</title>
        <authorList>
            <person name="Haeckel A."/>
            <person name="Ahuja R."/>
            <person name="Gundelfinger E.D."/>
            <person name="Qualmann B."/>
            <person name="Kessels M.M."/>
        </authorList>
    </citation>
    <scope>FUNCTION</scope>
    <scope>INTERACTION WITH SHANK2</scope>
</reference>
<reference key="13">
    <citation type="journal article" date="2009" name="Blood">
        <title>Liar, a novel Lyn-binding nuclear/cytoplasmic shuttling protein that influences erythropoietin-induced differentiation.</title>
        <authorList>
            <person name="Samuels A.L."/>
            <person name="Klinken S.P."/>
            <person name="Ingley E."/>
        </authorList>
    </citation>
    <scope>INTERACTION WITH ANKRD54</scope>
</reference>
<reference key="14">
    <citation type="journal article" date="2010" name="Cell">
        <title>A tissue-specific atlas of mouse protein phosphorylation and expression.</title>
        <authorList>
            <person name="Huttlin E.L."/>
            <person name="Jedrychowski M.P."/>
            <person name="Elias J.E."/>
            <person name="Goswami T."/>
            <person name="Rad R."/>
            <person name="Beausoleil S.A."/>
            <person name="Villen J."/>
            <person name="Haas W."/>
            <person name="Sowa M.E."/>
            <person name="Gygi S.P."/>
        </authorList>
    </citation>
    <scope>PHOSPHORYLATION [LARGE SCALE ANALYSIS] AT THR-26; SER-277 AND SER-280</scope>
    <scope>IDENTIFICATION BY MASS SPECTROMETRY [LARGE SCALE ANALYSIS]</scope>
    <source>
        <tissue>Brain</tissue>
        <tissue>Brown adipose tissue</tissue>
        <tissue>Heart</tissue>
        <tissue>Kidney</tissue>
        <tissue>Liver</tissue>
        <tissue>Lung</tissue>
        <tissue>Pancreas</tissue>
        <tissue>Spleen</tissue>
        <tissue>Testis</tissue>
    </source>
</reference>
<reference key="15">
    <citation type="journal article" date="2012" name="J. Cell Sci.">
        <title>Src-mediated phosphorylation of mammalian Abp1 (DBNL) regulates podosome rosette formation in transformed fibroblasts.</title>
        <authorList>
            <person name="Boateng L.R."/>
            <person name="Cortesio C.L."/>
            <person name="Huttenlocher A."/>
        </authorList>
    </citation>
    <scope>FUNCTION</scope>
    <scope>INTERACTION WITH WIPF1</scope>
    <scope>PHOSPHORYLATION AT TYR-340 AND TYR-350</scope>
    <scope>MUTAGENESIS OF TYR-340 AND TYR-350</scope>
    <scope>SUBCELLULAR LOCATION</scope>
</reference>
<reference key="16">
    <citation type="journal article" date="2012" name="J. Neurosci.">
        <title>The actin nucleator Cobl is crucial for Purkinje cell development and works in close conjunction with the F-actin binding protein Abp1.</title>
        <authorList>
            <person name="Haag N."/>
            <person name="Schwintzer L."/>
            <person name="Ahuja R."/>
            <person name="Koch N."/>
            <person name="Grimm J."/>
            <person name="Heuer H."/>
            <person name="Qualmann B."/>
            <person name="Kessels M.M."/>
        </authorList>
    </citation>
    <scope>FUNCTION</scope>
    <scope>INTERACTION WITH COBL</scope>
    <scope>SUBCELLULAR LOCATION</scope>
    <scope>TISSUE SPECIFICITY</scope>
</reference>
<accession>Q62418</accession>
<accession>Q3TG34</accession>
<accession>Q3U5X3</accession>
<accession>Q3U8I5</accession>
<accession>Q3UZ33</accession>
<accession>Q5NCI5</accession>
<accession>Q5NCI6</accession>
<accession>Q5NCI7</accession>
<accession>Q80WP1</accession>
<accession>Q8BH56</accession>
<comment type="function">
    <text evidence="9 12 13 15 16">Adapter protein that binds F-actin and DNM1, and thereby plays a role in receptor-mediated endocytosis. Plays a role in the reorganization of the actin cytoskeleton, formation of cell projections, such as neurites, in neuron morphogenesis and synapse formation via its interaction with WASL and COBL. Does not bind G-actin and promote actin polymerization by itself. Required for the formation of organized podosome rosettes. May act as a common effector of antigen receptor-signaling pathways in leukocytes. Acts as a key component of the immunological synapse that regulates T-cell activation by bridging TCRs and the actin cytoskeleton to gene activation and endocytic processes.</text>
</comment>
<comment type="subunit">
    <text evidence="1 8 9 10 12 13 14 15 16">Interacts with SHANK3, SYN1 and PRAM1 (By similarity). Interacts with SHANK2. Interacts with FGD1, DNM1 and MAP4K1. Interacts with ANKRD54. Interacts with COBL. Interacts with WASL and WIPF1.</text>
</comment>
<comment type="subcellular location">
    <subcellularLocation>
        <location evidence="8 12 17">Cytoplasm</location>
        <location evidence="8 12 17">Cytoskeleton</location>
    </subcellularLocation>
    <subcellularLocation>
        <location evidence="8 10">Cell projection</location>
        <location evidence="8 10">Lamellipodium</location>
    </subcellularLocation>
    <subcellularLocation>
        <location evidence="10">Cell projection</location>
        <location evidence="10">Ruffle</location>
    </subcellularLocation>
    <subcellularLocation>
        <location evidence="8 9 16">Cytoplasm</location>
        <location evidence="8 9 16">Cell cortex</location>
    </subcellularLocation>
    <subcellularLocation>
        <location evidence="2">Cytoplasm</location>
        <location evidence="2">Cytosol</location>
    </subcellularLocation>
    <subcellularLocation>
        <location evidence="9">Synapse</location>
    </subcellularLocation>
    <subcellularLocation>
        <location evidence="9">Perikaryon</location>
    </subcellularLocation>
    <subcellularLocation>
        <location evidence="9">Cell projection</location>
        <location evidence="9">Neuron projection</location>
    </subcellularLocation>
    <subcellularLocation>
        <location evidence="2">Cell membrane</location>
        <topology>Peripheral membrane protein</topology>
        <orientation>Cytoplasmic side</orientation>
    </subcellularLocation>
    <subcellularLocation>
        <location evidence="24">Cytoplasmic vesicle</location>
        <location evidence="24">Clathrin-coated vesicle membrane</location>
        <topology>Peripheral membrane protein</topology>
        <orientation>Cytoplasmic side</orientation>
    </subcellularLocation>
    <subcellularLocation>
        <location evidence="11">Golgi apparatus membrane</location>
        <topology>Peripheral membrane protein</topology>
        <orientation>Cytoplasmic side</orientation>
    </subcellularLocation>
    <subcellularLocation>
        <location evidence="15">Cell projection</location>
        <location evidence="15">Podosome</location>
    </subcellularLocation>
    <subcellularLocation>
        <location evidence="3">Early endosome</location>
    </subcellularLocation>
    <subcellularLocation>
        <location evidence="2">Cell projection</location>
        <location evidence="2">Dendrite</location>
    </subcellularLocation>
    <subcellularLocation>
        <location evidence="2">Postsynaptic density</location>
    </subcellularLocation>
    <text evidence="2 10 12 15">Associates with lamellipodial actin and membrane ruffles. Colocalizes with actin and cortactin at podosome dots and podosome rosettes.</text>
</comment>
<comment type="alternative products">
    <event type="alternative splicing"/>
    <isoform>
        <id>Q62418-1</id>
        <name evidence="10">1</name>
        <sequence type="displayed"/>
    </isoform>
    <isoform>
        <id>Q62418-2</id>
        <name evidence="17">2</name>
        <sequence type="described" ref="VSP_050790"/>
    </isoform>
    <isoform>
        <id>Q62418-3</id>
        <name evidence="23">3</name>
        <sequence type="described" ref="VSP_050789"/>
    </isoform>
</comment>
<comment type="tissue specificity">
    <text evidence="8 16 17">Detected in hippocampus neurons and in the Purkinje cell layer in cerebellum (at protein level). Predominantly expressed in brain, thymus and spleen. Also found in testis, heart and lung. Little or no expression detected in ovary or muscle.</text>
</comment>
<comment type="developmental stage">
    <text evidence="8">In the embryo, expression is high during early development but drops during later development.</text>
</comment>
<comment type="domain">
    <text evidence="1">The SH3 domain mediates interaction with SHANK2, SHANK3 and PRAM1.</text>
</comment>
<comment type="similarity">
    <text evidence="23">Belongs to the ABP1 family.</text>
</comment>
<sequence length="436" mass="48700">MAVNLSRNGPALQEAYVRVVTEKSPTDWALFTYEGNSNDIRVAGTGEGGLEELVEELNSGKVMYAFCRVKDPNSGLPKFVLINWTGEGVNDVRKGACANHVSTMANFLKGAHVTINARAEEDVEPECIMEKVAKASGANYSFHKESTSFQDVGPQAPVGSVYQKTNAISEIKRVGKDNFWAKAEKEEENRRLEEKRRAEEERQRLEEERRERELQEAARREQRYQEQHRSAGAPSPSSRTGEPEQEAVSRTRQEWESAGQQAPHPREIFKQKERAMSTTSVTSSQPGKLRSPFLQKQLTQPETSYGREPTAPVSRPAAGVCEEPAPSTLSSAQTEEEPTYEVPPEQDTLYEEPPLVQQQGAGSEHIDNYMQSQGFSGQGLCARALYDYQAADDTEISFDPENLITGIEVIDEGWWRGYGPDGHFGMFPANYVELIE</sequence>
<evidence type="ECO:0000250" key="1"/>
<evidence type="ECO:0000250" key="2">
    <source>
        <dbReference type="UniProtKB" id="Q9JHL4"/>
    </source>
</evidence>
<evidence type="ECO:0000250" key="3">
    <source>
        <dbReference type="UniProtKB" id="Q9UJU6"/>
    </source>
</evidence>
<evidence type="ECO:0000255" key="4"/>
<evidence type="ECO:0000255" key="5">
    <source>
        <dbReference type="PROSITE-ProRule" id="PRU00192"/>
    </source>
</evidence>
<evidence type="ECO:0000255" key="6">
    <source>
        <dbReference type="PROSITE-ProRule" id="PRU00599"/>
    </source>
</evidence>
<evidence type="ECO:0000256" key="7">
    <source>
        <dbReference type="SAM" id="MobiDB-lite"/>
    </source>
</evidence>
<evidence type="ECO:0000269" key="8">
    <source>
    </source>
</evidence>
<evidence type="ECO:0000269" key="9">
    <source>
    </source>
</evidence>
<evidence type="ECO:0000269" key="10">
    <source>
    </source>
</evidence>
<evidence type="ECO:0000269" key="11">
    <source>
    </source>
</evidence>
<evidence type="ECO:0000269" key="12">
    <source>
    </source>
</evidence>
<evidence type="ECO:0000269" key="13">
    <source>
    </source>
</evidence>
<evidence type="ECO:0000269" key="14">
    <source>
    </source>
</evidence>
<evidence type="ECO:0000269" key="15">
    <source>
    </source>
</evidence>
<evidence type="ECO:0000269" key="16">
    <source>
    </source>
</evidence>
<evidence type="ECO:0000269" key="17">
    <source>
    </source>
</evidence>
<evidence type="ECO:0000303" key="18">
    <source>
    </source>
</evidence>
<evidence type="ECO:0000303" key="19">
    <source>
    </source>
</evidence>
<evidence type="ECO:0000303" key="20">
    <source>
    </source>
</evidence>
<evidence type="ECO:0000303" key="21">
    <source>
    </source>
</evidence>
<evidence type="ECO:0000303" key="22">
    <source>
    </source>
</evidence>
<evidence type="ECO:0000305" key="23"/>
<evidence type="ECO:0000305" key="24">
    <source>
    </source>
</evidence>
<evidence type="ECO:0000312" key="25">
    <source>
        <dbReference type="EMBL" id="AAH46430.1"/>
    </source>
</evidence>
<evidence type="ECO:0000312" key="26">
    <source>
        <dbReference type="EMBL" id="AAM28340.1"/>
    </source>
</evidence>
<evidence type="ECO:0000312" key="27">
    <source>
        <dbReference type="MGI" id="MGI:700006"/>
    </source>
</evidence>
<evidence type="ECO:0007744" key="28">
    <source>
    </source>
</evidence>
<evidence type="ECO:0007744" key="29">
    <source>
    </source>
</evidence>
<proteinExistence type="evidence at protein level"/>
<feature type="chain" id="PRO_0000079794" description="Drebrin-like protein">
    <location>
        <begin position="1"/>
        <end position="436"/>
    </location>
</feature>
<feature type="domain" description="ADF-H" evidence="6">
    <location>
        <begin position="2"/>
        <end position="133"/>
    </location>
</feature>
<feature type="domain" description="SH3" evidence="5">
    <location>
        <begin position="377"/>
        <end position="436"/>
    </location>
</feature>
<feature type="region of interest" description="Disordered" evidence="7">
    <location>
        <begin position="185"/>
        <end position="341"/>
    </location>
</feature>
<feature type="coiled-coil region" evidence="4">
    <location>
        <begin position="179"/>
        <end position="233"/>
    </location>
</feature>
<feature type="compositionally biased region" description="Basic and acidic residues" evidence="7">
    <location>
        <begin position="185"/>
        <end position="229"/>
    </location>
</feature>
<feature type="compositionally biased region" description="Basic and acidic residues" evidence="7">
    <location>
        <begin position="264"/>
        <end position="275"/>
    </location>
</feature>
<feature type="compositionally biased region" description="Polar residues" evidence="7">
    <location>
        <begin position="276"/>
        <end position="286"/>
    </location>
</feature>
<feature type="compositionally biased region" description="Polar residues" evidence="7">
    <location>
        <begin position="294"/>
        <end position="303"/>
    </location>
</feature>
<feature type="site" description="Cleavage; by caspase-3" evidence="1">
    <location>
        <begin position="367"/>
        <end position="368"/>
    </location>
</feature>
<feature type="modified residue" description="Phosphothreonine" evidence="29">
    <location>
        <position position="26"/>
    </location>
</feature>
<feature type="modified residue" description="Phosphoserine" evidence="3">
    <location>
        <position position="160"/>
    </location>
</feature>
<feature type="modified residue" description="N6-acetyllysine" evidence="3">
    <location>
        <position position="176"/>
    </location>
</feature>
<feature type="modified residue" description="Phosphoserine" evidence="28 29">
    <location>
        <position position="277"/>
    </location>
</feature>
<feature type="modified residue" description="Phosphoserine" evidence="29">
    <location>
        <position position="280"/>
    </location>
</feature>
<feature type="modified residue" description="Phosphoserine" evidence="3">
    <location>
        <position position="283"/>
    </location>
</feature>
<feature type="modified residue" description="Phosphoserine" evidence="3">
    <location>
        <position position="291"/>
    </location>
</feature>
<feature type="modified residue" description="N6-acetyllysine" evidence="3">
    <location>
        <position position="296"/>
    </location>
</feature>
<feature type="modified residue" description="Phosphothreonine" evidence="3">
    <location>
        <position position="299"/>
    </location>
</feature>
<feature type="modified residue" description="Phosphotyrosine" evidence="15 17">
    <location>
        <position position="340"/>
    </location>
</feature>
<feature type="modified residue" description="Phosphotyrosine" evidence="15 17">
    <location>
        <position position="350"/>
    </location>
</feature>
<feature type="splice variant" id="VSP_050789" description="In isoform 3." evidence="18 19">
    <location>
        <begin position="235"/>
        <end position="238"/>
    </location>
</feature>
<feature type="splice variant" id="VSP_050790" description="In isoform 2." evidence="19 21 22">
    <location>
        <begin position="236"/>
        <end position="238"/>
    </location>
</feature>
<feature type="mutagenesis site" description="Reduces phosphorylation. Abolishes phosphorylation; when associated with F-350." evidence="15 17">
    <original>Y</original>
    <variation>F</variation>
    <location>
        <position position="340"/>
    </location>
</feature>
<feature type="mutagenesis site" description="Reduces phosphorylation. Impairs podosome rosette formation. Abolishes phosphorylation; when associated with F-340." evidence="15 17">
    <original>Y</original>
    <variation>F</variation>
    <location>
        <position position="350"/>
    </location>
</feature>
<feature type="sequence conflict" description="In Ref. 4; BAE40714." evidence="23" ref="4">
    <original>L</original>
    <variation>F</variation>
    <location>
        <position position="30"/>
    </location>
</feature>
<feature type="sequence conflict" description="In Ref. 4; BAE31953." evidence="23" ref="4">
    <original>V</original>
    <variation>D</variation>
    <location>
        <position position="101"/>
    </location>
</feature>
<feature type="sequence conflict" description="In Ref. 4; BAE30108/BAE31033." evidence="23" ref="4">
    <original>A</original>
    <variation>V</variation>
    <location>
        <position position="135"/>
    </location>
</feature>
<feature type="sequence conflict" description="In Ref. 4; BAE22028." evidence="23" ref="4">
    <original>S</original>
    <variation>C</variation>
    <location>
        <position position="327"/>
    </location>
</feature>
<protein>
    <recommendedName>
        <fullName>Drebrin-like protein</fullName>
    </recommendedName>
    <alternativeName>
        <fullName>Actin-binding protein 1</fullName>
    </alternativeName>
    <alternativeName>
        <fullName>SH3 domain-containing protein 7</fullName>
    </alternativeName>
</protein>